<organism>
    <name type="scientific">Influenza B virus (strain B/Hong Kong/8/1973)</name>
    <dbReference type="NCBI Taxonomy" id="427826"/>
    <lineage>
        <taxon>Viruses</taxon>
        <taxon>Riboviria</taxon>
        <taxon>Orthornavirae</taxon>
        <taxon>Negarnaviricota</taxon>
        <taxon>Polyploviricotina</taxon>
        <taxon>Insthoviricetes</taxon>
        <taxon>Articulavirales</taxon>
        <taxon>Orthomyxoviridae</taxon>
        <taxon>Betainfluenzavirus</taxon>
        <taxon>Betainfluenzavirus influenzae</taxon>
        <taxon>Influenza B virus</taxon>
    </lineage>
</organism>
<organismHost>
    <name type="scientific">Homo sapiens</name>
    <name type="common">Human</name>
    <dbReference type="NCBI Taxonomy" id="9606"/>
</organismHost>
<dbReference type="EC" id="3.2.1.18" evidence="1"/>
<dbReference type="EMBL" id="M30631">
    <property type="protein sequence ID" value="AAA43729.1"/>
    <property type="molecule type" value="Genomic_RNA"/>
</dbReference>
<dbReference type="PIR" id="H46347">
    <property type="entry name" value="H46347"/>
</dbReference>
<dbReference type="SMR" id="P16191"/>
<dbReference type="CAZy" id="GH34">
    <property type="family name" value="Glycoside Hydrolase Family 34"/>
</dbReference>
<dbReference type="GlyCosmos" id="P16191">
    <property type="glycosylation" value="4 sites, No reported glycans"/>
</dbReference>
<dbReference type="GO" id="GO:0020002">
    <property type="term" value="C:host cell plasma membrane"/>
    <property type="evidence" value="ECO:0007669"/>
    <property type="project" value="UniProtKB-SubCell"/>
</dbReference>
<dbReference type="GO" id="GO:0016020">
    <property type="term" value="C:membrane"/>
    <property type="evidence" value="ECO:0007669"/>
    <property type="project" value="UniProtKB-UniRule"/>
</dbReference>
<dbReference type="GO" id="GO:0055036">
    <property type="term" value="C:virion membrane"/>
    <property type="evidence" value="ECO:0007669"/>
    <property type="project" value="UniProtKB-SubCell"/>
</dbReference>
<dbReference type="GO" id="GO:0004308">
    <property type="term" value="F:exo-alpha-sialidase activity"/>
    <property type="evidence" value="ECO:0007669"/>
    <property type="project" value="UniProtKB-UniRule"/>
</dbReference>
<dbReference type="GO" id="GO:0046872">
    <property type="term" value="F:metal ion binding"/>
    <property type="evidence" value="ECO:0007669"/>
    <property type="project" value="UniProtKB-UniRule"/>
</dbReference>
<dbReference type="GO" id="GO:0005975">
    <property type="term" value="P:carbohydrate metabolic process"/>
    <property type="evidence" value="ECO:0007669"/>
    <property type="project" value="InterPro"/>
</dbReference>
<dbReference type="GO" id="GO:0046761">
    <property type="term" value="P:viral budding from plasma membrane"/>
    <property type="evidence" value="ECO:0007669"/>
    <property type="project" value="UniProtKB-UniRule"/>
</dbReference>
<dbReference type="CDD" id="cd15483">
    <property type="entry name" value="Influenza_NA"/>
    <property type="match status" value="1"/>
</dbReference>
<dbReference type="Gene3D" id="2.120.10.10">
    <property type="match status" value="1"/>
</dbReference>
<dbReference type="HAMAP" id="MF_04071">
    <property type="entry name" value="INFV_NRAM"/>
    <property type="match status" value="1"/>
</dbReference>
<dbReference type="InterPro" id="IPR001860">
    <property type="entry name" value="Glyco_hydro_34"/>
</dbReference>
<dbReference type="InterPro" id="IPR033654">
    <property type="entry name" value="Sialidase_Influenza_A/B"/>
</dbReference>
<dbReference type="InterPro" id="IPR036278">
    <property type="entry name" value="Sialidase_sf"/>
</dbReference>
<dbReference type="Pfam" id="PF00064">
    <property type="entry name" value="Neur"/>
    <property type="match status" value="1"/>
</dbReference>
<dbReference type="SUPFAM" id="SSF50939">
    <property type="entry name" value="Sialidases"/>
    <property type="match status" value="1"/>
</dbReference>
<feature type="chain" id="PRO_0000078731" description="Neuraminidase">
    <location>
        <begin position="1"/>
        <end position="466"/>
    </location>
</feature>
<feature type="topological domain" description="Intravirion" evidence="1">
    <location>
        <begin position="1"/>
        <end position="8"/>
    </location>
</feature>
<feature type="transmembrane region" description="Helical" evidence="1">
    <location>
        <begin position="9"/>
        <end position="31"/>
    </location>
</feature>
<feature type="topological domain" description="Virion surface" evidence="1">
    <location>
        <begin position="32"/>
        <end position="466"/>
    </location>
</feature>
<feature type="region of interest" description="Involved in apical transport and lipid raft association" evidence="1">
    <location>
        <begin position="13"/>
        <end position="35"/>
    </location>
</feature>
<feature type="region of interest" description="Hypervariable stalk region" evidence="1">
    <location>
        <begin position="38"/>
        <end position="86"/>
    </location>
</feature>
<feature type="region of interest" description="Head of neuraminidase" evidence="1">
    <location>
        <begin position="89"/>
        <end position="466"/>
    </location>
</feature>
<feature type="active site" description="Proton donor/acceptor" evidence="1">
    <location>
        <position position="149"/>
    </location>
</feature>
<feature type="active site" description="Nucleophile" evidence="1">
    <location>
        <position position="409"/>
    </location>
</feature>
<feature type="binding site" evidence="1">
    <location>
        <position position="116"/>
    </location>
    <ligand>
        <name>substrate</name>
    </ligand>
</feature>
<feature type="binding site" evidence="1">
    <location>
        <position position="150"/>
    </location>
    <ligand>
        <name>substrate</name>
    </ligand>
</feature>
<feature type="binding site" evidence="1">
    <location>
        <begin position="275"/>
        <end position="276"/>
    </location>
    <ligand>
        <name>substrate</name>
    </ligand>
</feature>
<feature type="binding site" evidence="1">
    <location>
        <position position="292"/>
    </location>
    <ligand>
        <name>substrate</name>
    </ligand>
</feature>
<feature type="binding site" evidence="1">
    <location>
        <position position="293"/>
    </location>
    <ligand>
        <name>Ca(2+)</name>
        <dbReference type="ChEBI" id="CHEBI:29108"/>
    </ligand>
</feature>
<feature type="binding site" evidence="1">
    <location>
        <position position="324"/>
    </location>
    <ligand>
        <name>Ca(2+)</name>
        <dbReference type="ChEBI" id="CHEBI:29108"/>
    </ligand>
</feature>
<feature type="binding site" evidence="1">
    <location>
        <position position="374"/>
    </location>
    <ligand>
        <name>substrate</name>
    </ligand>
</feature>
<feature type="glycosylation site" description="N-linked (GlcNAc...) asparagine; by host" evidence="1">
    <location>
        <position position="56"/>
    </location>
</feature>
<feature type="glycosylation site" description="N-linked (GlcNAc...) asparagine; by host" evidence="1">
    <location>
        <position position="64"/>
    </location>
</feature>
<feature type="glycosylation site" description="N-linked (GlcNAc...) asparagine; by host" evidence="1">
    <location>
        <position position="144"/>
    </location>
</feature>
<feature type="glycosylation site" description="N-linked (GlcNAc...) asparagine; by host" evidence="1">
    <location>
        <position position="284"/>
    </location>
</feature>
<feature type="disulfide bond" evidence="1">
    <location>
        <begin position="87"/>
        <end position="420"/>
    </location>
</feature>
<feature type="disulfide bond" evidence="1">
    <location>
        <begin position="122"/>
        <end position="127"/>
    </location>
</feature>
<feature type="disulfide bond" evidence="1">
    <location>
        <begin position="182"/>
        <end position="229"/>
    </location>
</feature>
<feature type="disulfide bond" evidence="1">
    <location>
        <begin position="231"/>
        <end position="236"/>
    </location>
</feature>
<feature type="disulfide bond" evidence="1">
    <location>
        <begin position="277"/>
        <end position="291"/>
    </location>
</feature>
<feature type="disulfide bond" evidence="1">
    <location>
        <begin position="279"/>
        <end position="289"/>
    </location>
</feature>
<feature type="disulfide bond" evidence="1">
    <location>
        <begin position="318"/>
        <end position="337"/>
    </location>
</feature>
<feature type="disulfide bond" evidence="1">
    <location>
        <begin position="424"/>
        <end position="447"/>
    </location>
</feature>
<sequence>MLPSTIQTLTLFLTSGGVLLSLYVSASLSYLLYSDILLKFSSTKRTAPTMSLDCANVSNVQAVNRSATKEMTFLLPEPEWTYPRLSCQGSTFQKALLISPHRFGETRGNSAPLIIREPFVACGPKECRHFALTHYAAQPGGYYNGTRKDRNKLRHLISVKLGKIPTVENSIFHMAAWSGSACHDGREWTYVGVDGPDSNALIKIKYGEAYTDTYHSYANNILRTQESACNCIGGDCYLMITDGSASGISKCRFLKIREGRIIKEIFPTGRVEHTEECTCGFASNKTIECACRDNSYTAKRPFVKLNVETDTAEIRLMCTETYLDTPRPDDGSITGPCESNGDKGLGGIKGGFVHQRMASKIGRWYSRTMSKTERMGMELYVKYDGDPWTDSDALAPSGVMVSMKEPGWYSFGFEIKDKKCDVPCIGIEMVHDGGKETWHSAATAIYCLMGSGQLLWDTVTGVDMAL</sequence>
<evidence type="ECO:0000255" key="1">
    <source>
        <dbReference type="HAMAP-Rule" id="MF_04071"/>
    </source>
</evidence>
<accession>P16191</accession>
<gene>
    <name evidence="1" type="primary">NA</name>
</gene>
<protein>
    <recommendedName>
        <fullName evidence="1">Neuraminidase</fullName>
        <ecNumber evidence="1">3.2.1.18</ecNumber>
    </recommendedName>
</protein>
<keyword id="KW-0106">Calcium</keyword>
<keyword id="KW-1015">Disulfide bond</keyword>
<keyword id="KW-0325">Glycoprotein</keyword>
<keyword id="KW-0326">Glycosidase</keyword>
<keyword id="KW-1032">Host cell membrane</keyword>
<keyword id="KW-1043">Host membrane</keyword>
<keyword id="KW-0378">Hydrolase</keyword>
<keyword id="KW-0472">Membrane</keyword>
<keyword id="KW-0479">Metal-binding</keyword>
<keyword id="KW-0735">Signal-anchor</keyword>
<keyword id="KW-0812">Transmembrane</keyword>
<keyword id="KW-1133">Transmembrane helix</keyword>
<keyword id="KW-0946">Virion</keyword>
<name>NRAM_INBHK</name>
<reference key="1">
    <citation type="journal article" date="1990" name="Virology">
        <title>Antigenic, sequence, and crystal variation in influenza B neuraminidase.</title>
        <authorList>
            <person name="Air G.M."/>
            <person name="Laver W.G."/>
            <person name="Luo M."/>
            <person name="Stray S.J."/>
            <person name="Legrone G."/>
            <person name="Webster R.G."/>
        </authorList>
    </citation>
    <scope>NUCLEOTIDE SEQUENCE [GENOMIC RNA]</scope>
</reference>
<reference key="2">
    <citation type="journal article" date="2005" name="N. Engl. J. Med.">
        <title>Neuraminidase inhibitors for influenza.</title>
        <authorList>
            <person name="Moscona A."/>
        </authorList>
    </citation>
    <scope>REVIEW</scope>
</reference>
<proteinExistence type="inferred from homology"/>
<comment type="function">
    <text evidence="1">Catalyzes the removal of terminal sialic acid residues from viral and cellular glycoconjugates. Cleaves off the terminal sialic acids on the glycosylated HA during virus budding to facilitate virus release. Additionally helps virus spread through the circulation by further removing sialic acids from the cell surface. These cleavages prevent self-aggregation and ensure the efficient spread of the progeny virus from cell to cell. Otherwise, infection would be limited to one round of replication. Described as a receptor-destroying enzyme because it cleaves a terminal sialic acid from the cellular receptors. May facilitate viral invasion of the upper airways by cleaving the sialic acid moieties on the mucin of the airway epithelial cells. Likely to plays a role in the budding process through its association with lipid rafts during intracellular transport. May additionally display a raft-association independent effect on budding. Plays a role in the determination of host range restriction on replication and virulence. Sialidase activity in late endosome/lysosome traffic seems to enhance virus replication.</text>
</comment>
<comment type="catalytic activity">
    <reaction evidence="1">
        <text>Hydrolysis of alpha-(2-&gt;3)-, alpha-(2-&gt;6)-, alpha-(2-&gt;8)- glycosidic linkages of terminal sialic acid residues in oligosaccharides, glycoproteins, glycolipids, colominic acid and synthetic substrates.</text>
        <dbReference type="EC" id="3.2.1.18"/>
    </reaction>
</comment>
<comment type="cofactor">
    <cofactor evidence="1">
        <name>Ca(2+)</name>
        <dbReference type="ChEBI" id="CHEBI:29108"/>
    </cofactor>
</comment>
<comment type="activity regulation">
    <text evidence="1">Inhibited by the neuraminidase inhibitors zanamivir (Relenza) and oseltamivir (Tamiflu). These drugs interfere with the release of progeny virus from infected cells and are effective against all influenza strains. Resistance to neuraminidase inhibitors is quite rare.</text>
</comment>
<comment type="subunit">
    <text evidence="1">Homotetramer.</text>
</comment>
<comment type="subcellular location">
    <subcellularLocation>
        <location evidence="1">Virion membrane</location>
    </subcellularLocation>
    <subcellularLocation>
        <location evidence="1">Host apical cell membrane</location>
        <topology evidence="1">Single-pass type II membrane protein</topology>
    </subcellularLocation>
    <text evidence="1">Preferentially accumulates at the apical plasma membrane in infected polarized epithelial cells, which is the virus assembly site. Uses lipid rafts for cell surface transport and apical sorting. In the virion, forms a mushroom-shaped spike on the surface of the membrane.</text>
</comment>
<comment type="domain">
    <text evidence="1">Intact N-terminus is essential for virion morphogenesis. Possesses two apical sorting signals, one in the ectodomain, which is likely to be a glycan, and the other in the transmembrane domain. The transmembrane domain also plays a role in lipid raft association.</text>
</comment>
<comment type="PTM">
    <text evidence="1">N-glycosylated.</text>
</comment>
<comment type="miscellaneous">
    <text>The influenza B genome consist of 8 RNA segments. Genetic variation of hemagglutinin and/or neuraminidase genes results in the emergence of new influenza strains. The mechanism of variation can be the result of point mutations or the result of genetic reassortment between segments of two different strains.</text>
</comment>
<comment type="similarity">
    <text evidence="1">Belongs to the glycosyl hydrolase 34 family.</text>
</comment>